<dbReference type="EC" id="3.1.-.-" evidence="1"/>
<dbReference type="EMBL" id="CP000745">
    <property type="protein sequence ID" value="ABR66150.1"/>
    <property type="molecule type" value="Genomic_DNA"/>
</dbReference>
<dbReference type="SMR" id="A6VI74"/>
<dbReference type="STRING" id="426368.MmarC7_1084"/>
<dbReference type="KEGG" id="mmz:MmarC7_1084"/>
<dbReference type="eggNOG" id="arCOG01741">
    <property type="taxonomic scope" value="Archaea"/>
</dbReference>
<dbReference type="HOGENOM" id="CLU_023334_0_0_2"/>
<dbReference type="OrthoDB" id="31300at2157"/>
<dbReference type="GO" id="GO:0005737">
    <property type="term" value="C:cytoplasm"/>
    <property type="evidence" value="ECO:0007669"/>
    <property type="project" value="UniProtKB-SubCell"/>
</dbReference>
<dbReference type="GO" id="GO:0004519">
    <property type="term" value="F:endonuclease activity"/>
    <property type="evidence" value="ECO:0007669"/>
    <property type="project" value="UniProtKB-UniRule"/>
</dbReference>
<dbReference type="GO" id="GO:0046872">
    <property type="term" value="F:metal ion binding"/>
    <property type="evidence" value="ECO:0007669"/>
    <property type="project" value="UniProtKB-UniRule"/>
</dbReference>
<dbReference type="GO" id="GO:0070651">
    <property type="term" value="P:nonfunctional rRNA decay"/>
    <property type="evidence" value="ECO:0007669"/>
    <property type="project" value="TreeGrafter"/>
</dbReference>
<dbReference type="GO" id="GO:0070966">
    <property type="term" value="P:nuclear-transcribed mRNA catabolic process, no-go decay"/>
    <property type="evidence" value="ECO:0007669"/>
    <property type="project" value="InterPro"/>
</dbReference>
<dbReference type="GO" id="GO:0070481">
    <property type="term" value="P:nuclear-transcribed mRNA catabolic process, non-stop decay"/>
    <property type="evidence" value="ECO:0007669"/>
    <property type="project" value="InterPro"/>
</dbReference>
<dbReference type="GO" id="GO:0032790">
    <property type="term" value="P:ribosome disassembly"/>
    <property type="evidence" value="ECO:0007669"/>
    <property type="project" value="TreeGrafter"/>
</dbReference>
<dbReference type="GO" id="GO:0071025">
    <property type="term" value="P:RNA surveillance"/>
    <property type="evidence" value="ECO:0007669"/>
    <property type="project" value="InterPro"/>
</dbReference>
<dbReference type="Gene3D" id="3.30.1330.30">
    <property type="match status" value="1"/>
</dbReference>
<dbReference type="Gene3D" id="3.30.420.60">
    <property type="entry name" value="eRF1 domain 2"/>
    <property type="match status" value="1"/>
</dbReference>
<dbReference type="Gene3D" id="2.30.30.870">
    <property type="entry name" value="Pelota, domain A"/>
    <property type="match status" value="1"/>
</dbReference>
<dbReference type="HAMAP" id="MF_01853">
    <property type="entry name" value="PelO"/>
    <property type="match status" value="1"/>
</dbReference>
<dbReference type="InterPro" id="IPR042226">
    <property type="entry name" value="eFR1_2_sf"/>
</dbReference>
<dbReference type="InterPro" id="IPR005140">
    <property type="entry name" value="eRF1_1_Pelota"/>
</dbReference>
<dbReference type="InterPro" id="IPR005141">
    <property type="entry name" value="eRF1_2"/>
</dbReference>
<dbReference type="InterPro" id="IPR005142">
    <property type="entry name" value="eRF1_3"/>
</dbReference>
<dbReference type="InterPro" id="IPR038069">
    <property type="entry name" value="Pelota/DOM34_N"/>
</dbReference>
<dbReference type="InterPro" id="IPR023521">
    <property type="entry name" value="Pelota_arc"/>
</dbReference>
<dbReference type="InterPro" id="IPR029064">
    <property type="entry name" value="Ribosomal_eL30-like_sf"/>
</dbReference>
<dbReference type="InterPro" id="IPR004405">
    <property type="entry name" value="Transl-rel_pelota"/>
</dbReference>
<dbReference type="NCBIfam" id="TIGR00111">
    <property type="entry name" value="pelota"/>
    <property type="match status" value="1"/>
</dbReference>
<dbReference type="PANTHER" id="PTHR10853">
    <property type="entry name" value="PELOTA"/>
    <property type="match status" value="1"/>
</dbReference>
<dbReference type="PANTHER" id="PTHR10853:SF0">
    <property type="entry name" value="PROTEIN PELOTA HOMOLOG"/>
    <property type="match status" value="1"/>
</dbReference>
<dbReference type="Pfam" id="PF03463">
    <property type="entry name" value="eRF1_1"/>
    <property type="match status" value="1"/>
</dbReference>
<dbReference type="Pfam" id="PF03464">
    <property type="entry name" value="eRF1_2"/>
    <property type="match status" value="1"/>
</dbReference>
<dbReference type="Pfam" id="PF03465">
    <property type="entry name" value="eRF1_3"/>
    <property type="match status" value="1"/>
</dbReference>
<dbReference type="SMART" id="SM01194">
    <property type="entry name" value="eRF1_1"/>
    <property type="match status" value="1"/>
</dbReference>
<dbReference type="SUPFAM" id="SSF159065">
    <property type="entry name" value="Dom34/Pelota N-terminal domain-like"/>
    <property type="match status" value="1"/>
</dbReference>
<dbReference type="SUPFAM" id="SSF55315">
    <property type="entry name" value="L30e-like"/>
    <property type="match status" value="1"/>
</dbReference>
<dbReference type="SUPFAM" id="SSF53137">
    <property type="entry name" value="Translational machinery components"/>
    <property type="match status" value="1"/>
</dbReference>
<accession>A6VI74</accession>
<evidence type="ECO:0000255" key="1">
    <source>
        <dbReference type="HAMAP-Rule" id="MF_01853"/>
    </source>
</evidence>
<comment type="function">
    <text evidence="1">May function in recognizing stalled ribosomes, interact with stem-loop structures in stalled mRNA molecules, and effect endonucleolytic cleavage of the mRNA. May play a role in the release non-functional ribosomes and degradation of damaged mRNAs. Has endoribonuclease activity.</text>
</comment>
<comment type="cofactor">
    <cofactor evidence="1">
        <name>a divalent metal cation</name>
        <dbReference type="ChEBI" id="CHEBI:60240"/>
    </cofactor>
</comment>
<comment type="subunit">
    <text evidence="1">Monomer.</text>
</comment>
<comment type="subcellular location">
    <subcellularLocation>
        <location evidence="1">Cytoplasm</location>
    </subcellularLocation>
</comment>
<comment type="domain">
    <text evidence="1">The N-terminal domain has the RNA-binding Sm fold. It harbors the endoribonuclease activity.</text>
</comment>
<comment type="similarity">
    <text evidence="1">Belongs to the eukaryotic release factor 1 family. Pelota subfamily.</text>
</comment>
<keyword id="KW-0963">Cytoplasm</keyword>
<keyword id="KW-0255">Endonuclease</keyword>
<keyword id="KW-0378">Hydrolase</keyword>
<keyword id="KW-0479">Metal-binding</keyword>
<keyword id="KW-0540">Nuclease</keyword>
<feature type="chain" id="PRO_0000361798" description="Protein pelota homolog">
    <location>
        <begin position="1"/>
        <end position="348"/>
    </location>
</feature>
<sequence>MKIIQEIPEKNIIKLIPENLDDLWHLSNIIQPYNAIYAVTERRTEDKGDKLRADRGTKRKVFLGIKAEKINFHEDFNRLRVSGKIIHAPEDIPIGSYHTIDIEPLLQVSVQKNWKKWDLARLKDAEDSSKKPKVVVVIMDDSEADIFLVREFGIKELASIKSGVSKKLDYKQNEQAKFSYYSDIINSISEFEGKILFAGPGFGKNNIQNYISEKHKDLAPNVVVESANHTGKSGLSEILKSGIIDKIYGEARISKETQIIEKLLEEISKKGLAAYGIESVNNAMNYSAIDTLLLTDEYLRRNRRTIEELMNSVENINGSILIISTEHDAGKQLKALGGISALLRFPIE</sequence>
<proteinExistence type="inferred from homology"/>
<protein>
    <recommendedName>
        <fullName evidence="1">Protein pelota homolog</fullName>
        <ecNumber evidence="1">3.1.-.-</ecNumber>
    </recommendedName>
</protein>
<reference key="1">
    <citation type="submission" date="2007-06" db="EMBL/GenBank/DDBJ databases">
        <title>Complete sequence of Methanococcus maripaludis C7.</title>
        <authorList>
            <consortium name="US DOE Joint Genome Institute"/>
            <person name="Copeland A."/>
            <person name="Lucas S."/>
            <person name="Lapidus A."/>
            <person name="Barry K."/>
            <person name="Glavina del Rio T."/>
            <person name="Dalin E."/>
            <person name="Tice H."/>
            <person name="Pitluck S."/>
            <person name="Clum A."/>
            <person name="Schmutz J."/>
            <person name="Larimer F."/>
            <person name="Land M."/>
            <person name="Hauser L."/>
            <person name="Kyrpides N."/>
            <person name="Anderson I."/>
            <person name="Sieprawska-Lupa M."/>
            <person name="Whitman W.B."/>
            <person name="Richardson P."/>
        </authorList>
    </citation>
    <scope>NUCLEOTIDE SEQUENCE [LARGE SCALE GENOMIC DNA]</scope>
    <source>
        <strain>C7 / ATCC BAA-1331</strain>
    </source>
</reference>
<gene>
    <name evidence="1" type="primary">pelA</name>
    <name type="ordered locus">MmarC7_1084</name>
</gene>
<name>PELO_METM7</name>
<organism>
    <name type="scientific">Methanococcus maripaludis (strain C7 / ATCC BAA-1331)</name>
    <dbReference type="NCBI Taxonomy" id="426368"/>
    <lineage>
        <taxon>Archaea</taxon>
        <taxon>Methanobacteriati</taxon>
        <taxon>Methanobacteriota</taxon>
        <taxon>Methanomada group</taxon>
        <taxon>Methanococci</taxon>
        <taxon>Methanococcales</taxon>
        <taxon>Methanococcaceae</taxon>
        <taxon>Methanococcus</taxon>
    </lineage>
</organism>